<sequence length="131" mass="13743">MATFQVAVADPESGRTYQFEVDGQDANRFIGREIGAAVDGGAVGLDGYTVEITGGSDDAGRPMREDVDGSDLMEVLLEGGAGFNPDEDGERKRVTVRGKEVSEAVAQLNVAIDEHGEEPVAELLGADGDDE</sequence>
<comment type="similarity">
    <text evidence="1">Belongs to the eukaryotic ribosomal protein eS6 family.</text>
</comment>
<gene>
    <name evidence="1" type="primary">rps6e</name>
    <name type="ordered locus">OE_4532F</name>
</gene>
<accession>B0R815</accession>
<feature type="chain" id="PRO_1000127262" description="Small ribosomal subunit protein eS6">
    <location>
        <begin position="1"/>
        <end position="131"/>
    </location>
</feature>
<organism>
    <name type="scientific">Halobacterium salinarum (strain ATCC 29341 / DSM 671 / R1)</name>
    <dbReference type="NCBI Taxonomy" id="478009"/>
    <lineage>
        <taxon>Archaea</taxon>
        <taxon>Methanobacteriati</taxon>
        <taxon>Methanobacteriota</taxon>
        <taxon>Stenosarchaea group</taxon>
        <taxon>Halobacteria</taxon>
        <taxon>Halobacteriales</taxon>
        <taxon>Halobacteriaceae</taxon>
        <taxon>Halobacterium</taxon>
        <taxon>Halobacterium salinarum NRC-34001</taxon>
    </lineage>
</organism>
<evidence type="ECO:0000255" key="1">
    <source>
        <dbReference type="HAMAP-Rule" id="MF_00512"/>
    </source>
</evidence>
<evidence type="ECO:0000305" key="2"/>
<name>RS6E_HALS3</name>
<dbReference type="EMBL" id="AM774415">
    <property type="protein sequence ID" value="CAP14884.1"/>
    <property type="molecule type" value="Genomic_DNA"/>
</dbReference>
<dbReference type="RefSeq" id="WP_010903878.1">
    <property type="nucleotide sequence ID" value="NC_010364.1"/>
</dbReference>
<dbReference type="SMR" id="B0R815"/>
<dbReference type="EnsemblBacteria" id="CAP14884">
    <property type="protein sequence ID" value="CAP14884"/>
    <property type="gene ID" value="OE_4532F"/>
</dbReference>
<dbReference type="KEGG" id="hsl:OE_4532F"/>
<dbReference type="HOGENOM" id="CLU_109671_1_1_2"/>
<dbReference type="PhylomeDB" id="B0R815"/>
<dbReference type="Proteomes" id="UP000001321">
    <property type="component" value="Chromosome"/>
</dbReference>
<dbReference type="GO" id="GO:1990904">
    <property type="term" value="C:ribonucleoprotein complex"/>
    <property type="evidence" value="ECO:0007669"/>
    <property type="project" value="UniProtKB-KW"/>
</dbReference>
<dbReference type="GO" id="GO:0005840">
    <property type="term" value="C:ribosome"/>
    <property type="evidence" value="ECO:0007669"/>
    <property type="project" value="UniProtKB-KW"/>
</dbReference>
<dbReference type="GO" id="GO:0003735">
    <property type="term" value="F:structural constituent of ribosome"/>
    <property type="evidence" value="ECO:0007669"/>
    <property type="project" value="InterPro"/>
</dbReference>
<dbReference type="GO" id="GO:0006412">
    <property type="term" value="P:translation"/>
    <property type="evidence" value="ECO:0007669"/>
    <property type="project" value="UniProtKB-UniRule"/>
</dbReference>
<dbReference type="HAMAP" id="MF_00512">
    <property type="entry name" value="Ribosomal_eS6"/>
    <property type="match status" value="1"/>
</dbReference>
<dbReference type="InterPro" id="IPR001377">
    <property type="entry name" value="Ribosomal_eS6"/>
</dbReference>
<dbReference type="InterPro" id="IPR020924">
    <property type="entry name" value="Ribosomal_eS6_arc"/>
</dbReference>
<dbReference type="InterPro" id="IPR018282">
    <property type="entry name" value="Ribosomal_eS6_CS"/>
</dbReference>
<dbReference type="NCBIfam" id="NF003294">
    <property type="entry name" value="PRK04290.1-3"/>
    <property type="match status" value="1"/>
</dbReference>
<dbReference type="PANTHER" id="PTHR11502">
    <property type="entry name" value="40S RIBOSOMAL PROTEIN S6"/>
    <property type="match status" value="1"/>
</dbReference>
<dbReference type="Pfam" id="PF01092">
    <property type="entry name" value="Ribosomal_S6e"/>
    <property type="match status" value="1"/>
</dbReference>
<dbReference type="SMART" id="SM01405">
    <property type="entry name" value="Ribosomal_S6e"/>
    <property type="match status" value="1"/>
</dbReference>
<dbReference type="PROSITE" id="PS00578">
    <property type="entry name" value="RIBOSOMAL_S6E"/>
    <property type="match status" value="1"/>
</dbReference>
<protein>
    <recommendedName>
        <fullName evidence="1">Small ribosomal subunit protein eS6</fullName>
    </recommendedName>
    <alternativeName>
        <fullName evidence="2">30S ribosomal protein S6e</fullName>
    </alternativeName>
</protein>
<reference key="1">
    <citation type="journal article" date="2008" name="Genomics">
        <title>Evolution in the laboratory: the genome of Halobacterium salinarum strain R1 compared to that of strain NRC-1.</title>
        <authorList>
            <person name="Pfeiffer F."/>
            <person name="Schuster S.C."/>
            <person name="Broicher A."/>
            <person name="Falb M."/>
            <person name="Palm P."/>
            <person name="Rodewald K."/>
            <person name="Ruepp A."/>
            <person name="Soppa J."/>
            <person name="Tittor J."/>
            <person name="Oesterhelt D."/>
        </authorList>
    </citation>
    <scope>NUCLEOTIDE SEQUENCE [LARGE SCALE GENOMIC DNA]</scope>
    <source>
        <strain>ATCC 29341 / DSM 671 / R1</strain>
    </source>
</reference>
<keyword id="KW-0687">Ribonucleoprotein</keyword>
<keyword id="KW-0689">Ribosomal protein</keyword>
<proteinExistence type="inferred from homology"/>